<sequence>MYTRSSGLKTLKLDDLVQVVKLTRVDTPHPAQHVGIPTIRNVGLLEPLPVMQGRV</sequence>
<name>ORF7_BYDVP</name>
<organismHost>
    <name type="scientific">Avena byzantina</name>
    <dbReference type="NCBI Taxonomy" id="146531"/>
</organismHost>
<organismHost>
    <name type="scientific">Avena sativa</name>
    <name type="common">Oat</name>
    <dbReference type="NCBI Taxonomy" id="4498"/>
</organismHost>
<organismHost>
    <name type="scientific">Hordeum vulgare</name>
    <name type="common">Barley</name>
    <dbReference type="NCBI Taxonomy" id="4513"/>
</organismHost>
<organismHost>
    <name type="scientific">Lolium multiflorum</name>
    <name type="common">Italian ryegrass</name>
    <name type="synonym">Lolium perenne subsp. multiflorum</name>
    <dbReference type="NCBI Taxonomy" id="4521"/>
</organismHost>
<organismHost>
    <name type="scientific">Lolium perenne</name>
    <name type="common">Perennial ryegrass</name>
    <dbReference type="NCBI Taxonomy" id="4522"/>
</organismHost>
<organismHost>
    <name type="scientific">Oryza sativa</name>
    <name type="common">Rice</name>
    <dbReference type="NCBI Taxonomy" id="4530"/>
</organismHost>
<organismHost>
    <name type="scientific">Secale cereale</name>
    <name type="common">Rye</name>
    <dbReference type="NCBI Taxonomy" id="4550"/>
</organismHost>
<organismHost>
    <name type="scientific">Triticum aestivum</name>
    <name type="common">Wheat</name>
    <dbReference type="NCBI Taxonomy" id="4565"/>
</organismHost>
<organismHost>
    <name type="scientific">Zea mays</name>
    <name type="common">Maize</name>
    <dbReference type="NCBI Taxonomy" id="4577"/>
</organismHost>
<reference key="1">
    <citation type="journal article" date="1988" name="Nucleic Acids Res.">
        <title>Sequence and organization of barley yellow dwarf virus genomic RNA.</title>
        <authorList>
            <person name="Miller W.A."/>
            <person name="Waterhouse P.M."/>
            <person name="Gerlach W.L."/>
        </authorList>
    </citation>
    <scope>NUCLEOTIDE SEQUENCE [GENOMIC RNA]</scope>
</reference>
<protein>
    <recommendedName>
        <fullName>Uncharacterized protein ORF7</fullName>
    </recommendedName>
</protein>
<proteinExistence type="predicted"/>
<keyword id="KW-1185">Reference proteome</keyword>
<accession>P09518</accession>
<dbReference type="EMBL" id="X07653">
    <property type="protein sequence ID" value="CAA30497.1"/>
    <property type="molecule type" value="Genomic_RNA"/>
</dbReference>
<dbReference type="KEGG" id="vg:1491999"/>
<dbReference type="Proteomes" id="UP000006722">
    <property type="component" value="Genome"/>
</dbReference>
<feature type="chain" id="PRO_0000222432" description="Uncharacterized protein ORF7">
    <location>
        <begin position="1"/>
        <end position="55"/>
    </location>
</feature>
<organism>
    <name type="scientific">Barley yellow dwarf virus (isolate PAV)</name>
    <name type="common">BYDV</name>
    <dbReference type="NCBI Taxonomy" id="2169986"/>
    <lineage>
        <taxon>Viruses</taxon>
        <taxon>Riboviria</taxon>
        <taxon>Orthornavirae</taxon>
        <taxon>Kitrinoviricota</taxon>
        <taxon>Tolucaviricetes</taxon>
        <taxon>Tolivirales</taxon>
        <taxon>Tombusviridae</taxon>
        <taxon>Regressovirinae</taxon>
        <taxon>Luteovirus</taxon>
        <taxon>Luteovirus pavhordei</taxon>
    </lineage>
</organism>
<gene>
    <name type="ORF">ORF7</name>
</gene>